<sequence>MSDSSPTINFINFNQTGTCISLGTSKGFKIFNCEPFGKFYSEDSGGYAIVEMLFSTSLLALVGIGDQPALSPRRLRIINTKKHSIICEVTFPTSILSVKMNKSRLVVLLQEQIYIYDINTMRLLHTIETNPNPRGLMAMSPSVANSYLVYPSPPKVINSEIKAHATTNNITLSVGGNTETSFKRDQQDAGHSDISDLDQYSSFTKRDDADPTSSNGGNSSIIKNGDVIVFNLETLQPTMVIEAHKGEIAAMAISFDGTLMATASDKGTIIRVFDIETGDKIYQFRRGTYATRIYSISFSEDSQYLAVTGSSKTVHIFKLGHSMSNNKLDSDDSNMEEAAADDSSLDTTSIDALSDEENPTRLAREPYVDASRKTMGRMIRYSSQKLSRRAARTLGQIFPIKVTSLLESSRHFASLKLPVETNSHVMTISSIGSPIDIDTSEYPELFETGNSASTESYHEPVMKMVPIRVVSSDGYLYNFVMDPERGGDCLILSQYSILMD</sequence>
<reference key="1">
    <citation type="journal article" date="2007" name="Proc. Natl. Acad. Sci. U.S.A.">
        <title>Genome sequencing and comparative analysis of Saccharomyces cerevisiae strain YJM789.</title>
        <authorList>
            <person name="Wei W."/>
            <person name="McCusker J.H."/>
            <person name="Hyman R.W."/>
            <person name="Jones T."/>
            <person name="Ning Y."/>
            <person name="Cao Z."/>
            <person name="Gu Z."/>
            <person name="Bruno D."/>
            <person name="Miranda M."/>
            <person name="Nguyen M."/>
            <person name="Wilhelmy J."/>
            <person name="Komp C."/>
            <person name="Tamse R."/>
            <person name="Wang X."/>
            <person name="Jia P."/>
            <person name="Luedi P."/>
            <person name="Oefner P.J."/>
            <person name="David L."/>
            <person name="Dietrich F.S."/>
            <person name="Li Y."/>
            <person name="Davis R.W."/>
            <person name="Steinmetz L.M."/>
        </authorList>
    </citation>
    <scope>NUCLEOTIDE SEQUENCE [LARGE SCALE GENOMIC DNA]</scope>
    <source>
        <strain>YJM789</strain>
    </source>
</reference>
<accession>A7A258</accession>
<organism>
    <name type="scientific">Saccharomyces cerevisiae (strain YJM789)</name>
    <name type="common">Baker's yeast</name>
    <dbReference type="NCBI Taxonomy" id="307796"/>
    <lineage>
        <taxon>Eukaryota</taxon>
        <taxon>Fungi</taxon>
        <taxon>Dikarya</taxon>
        <taxon>Ascomycota</taxon>
        <taxon>Saccharomycotina</taxon>
        <taxon>Saccharomycetes</taxon>
        <taxon>Saccharomycetales</taxon>
        <taxon>Saccharomycetaceae</taxon>
        <taxon>Saccharomyces</taxon>
    </lineage>
</organism>
<gene>
    <name type="primary">ATG18</name>
    <name type="synonym">AUT10</name>
    <name type="synonym">CVT18</name>
    <name type="synonym">NMR1</name>
    <name type="synonym">SVP1</name>
    <name type="ORF">SCY_1768</name>
</gene>
<keyword id="KW-0072">Autophagy</keyword>
<keyword id="KW-0967">Endosome</keyword>
<keyword id="KW-0472">Membrane</keyword>
<keyword id="KW-0597">Phosphoprotein</keyword>
<keyword id="KW-0653">Protein transport</keyword>
<keyword id="KW-0677">Repeat</keyword>
<keyword id="KW-0813">Transport</keyword>
<keyword id="KW-0926">Vacuole</keyword>
<keyword id="KW-0853">WD repeat</keyword>
<feature type="chain" id="PRO_0000318011" description="Autophagy-related protein 18">
    <location>
        <begin position="1"/>
        <end position="500"/>
    </location>
</feature>
<feature type="repeat" description="WD 1">
    <location>
        <begin position="3"/>
        <end position="41"/>
    </location>
</feature>
<feature type="repeat" description="WD 2">
    <location>
        <begin position="243"/>
        <end position="283"/>
    </location>
</feature>
<feature type="repeat" description="WD 3">
    <location>
        <begin position="288"/>
        <end position="327"/>
    </location>
</feature>
<feature type="region of interest" description="Disordered" evidence="3">
    <location>
        <begin position="174"/>
        <end position="197"/>
    </location>
</feature>
<feature type="region of interest" description="Disordered" evidence="3">
    <location>
        <begin position="328"/>
        <end position="358"/>
    </location>
</feature>
<feature type="short sequence motif" description="L/FRRG motif" evidence="2">
    <location>
        <begin position="284"/>
        <end position="288"/>
    </location>
</feature>
<feature type="compositionally biased region" description="Basic and acidic residues" evidence="3">
    <location>
        <begin position="181"/>
        <end position="194"/>
    </location>
</feature>
<feature type="compositionally biased region" description="Acidic residues" evidence="3">
    <location>
        <begin position="331"/>
        <end position="344"/>
    </location>
</feature>
<feature type="modified residue" description="Phosphoserine" evidence="2">
    <location>
        <position position="354"/>
    </location>
</feature>
<dbReference type="EMBL" id="AAFW02000176">
    <property type="protein sequence ID" value="EDN59169.1"/>
    <property type="molecule type" value="Genomic_DNA"/>
</dbReference>
<dbReference type="SMR" id="A7A258"/>
<dbReference type="HOGENOM" id="CLU_025895_5_2_1"/>
<dbReference type="Proteomes" id="UP000007060">
    <property type="component" value="Unassembled WGS sequence"/>
</dbReference>
<dbReference type="GO" id="GO:0010008">
    <property type="term" value="C:endosome membrane"/>
    <property type="evidence" value="ECO:0007669"/>
    <property type="project" value="UniProtKB-SubCell"/>
</dbReference>
<dbReference type="GO" id="GO:0034045">
    <property type="term" value="C:phagophore assembly site membrane"/>
    <property type="evidence" value="ECO:0007669"/>
    <property type="project" value="UniProtKB-SubCell"/>
</dbReference>
<dbReference type="GO" id="GO:0005774">
    <property type="term" value="C:vacuolar membrane"/>
    <property type="evidence" value="ECO:0007669"/>
    <property type="project" value="UniProtKB-SubCell"/>
</dbReference>
<dbReference type="GO" id="GO:0006914">
    <property type="term" value="P:autophagy"/>
    <property type="evidence" value="ECO:0007669"/>
    <property type="project" value="UniProtKB-KW"/>
</dbReference>
<dbReference type="GO" id="GO:0015031">
    <property type="term" value="P:protein transport"/>
    <property type="evidence" value="ECO:0007669"/>
    <property type="project" value="UniProtKB-KW"/>
</dbReference>
<dbReference type="FunFam" id="2.130.10.10:FF:001026">
    <property type="entry name" value="Atg18p"/>
    <property type="match status" value="1"/>
</dbReference>
<dbReference type="Gene3D" id="2.130.10.10">
    <property type="entry name" value="YVTN repeat-like/Quinoprotein amine dehydrogenase"/>
    <property type="match status" value="1"/>
</dbReference>
<dbReference type="InterPro" id="IPR048720">
    <property type="entry name" value="PROPPIN"/>
</dbReference>
<dbReference type="InterPro" id="IPR015943">
    <property type="entry name" value="WD40/YVTN_repeat-like_dom_sf"/>
</dbReference>
<dbReference type="InterPro" id="IPR036322">
    <property type="entry name" value="WD40_repeat_dom_sf"/>
</dbReference>
<dbReference type="InterPro" id="IPR001680">
    <property type="entry name" value="WD40_rpt"/>
</dbReference>
<dbReference type="PANTHER" id="PTHR11227">
    <property type="entry name" value="WD-REPEAT PROTEIN INTERACTING WITH PHOSPHOINOSIDES WIPI -RELATED"/>
    <property type="match status" value="1"/>
</dbReference>
<dbReference type="Pfam" id="PF21032">
    <property type="entry name" value="PROPPIN"/>
    <property type="match status" value="2"/>
</dbReference>
<dbReference type="SMART" id="SM00320">
    <property type="entry name" value="WD40"/>
    <property type="match status" value="2"/>
</dbReference>
<dbReference type="SUPFAM" id="SSF50978">
    <property type="entry name" value="WD40 repeat-like"/>
    <property type="match status" value="1"/>
</dbReference>
<dbReference type="PROSITE" id="PS50294">
    <property type="entry name" value="WD_REPEATS_REGION"/>
    <property type="match status" value="1"/>
</dbReference>
<name>ATG18_YEAS7</name>
<proteinExistence type="inferred from homology"/>
<comment type="function">
    <text evidence="1">The PI(3,5)P2 regulatory complex regulates both the synthesis and turnover of phosphatidylinositol 3,5-bisphosphate (PtdIns(3,5)P2). May negatively regulate FAB1 activity by sequestering or masking VAC7 from FAB1. Necessary for proper vacuole morphology. Plays an important role in osmotically-induced vacuole fragmentation. Required for cytoplasm to vacuole transport (Cvt) vesicle formation, pexophagy and starvation-induced autophagy. Involved in correct ATG9 trafficking to the pre-autophagosomal structure. Might also be involved in premeiotic DNA replication. With ATG2, protects ATG8 from ARG4-mediated cleavage (By similarity).</text>
</comment>
<comment type="subunit">
    <text evidence="1">Component of the PI(3,5)P2 regulatory complex, composed of ATG18, FIG4, FAB1, VAC14 and VAC7 (By similarity). VAC14 nucleates the assembly of the complex and serves as a scaffold (By similarity). Interacts with ATG2, ATG9 and VAC17. The ATG2-ATG18 complex is essential for autophagosome formation (By similarity).</text>
</comment>
<comment type="subcellular location">
    <subcellularLocation>
        <location evidence="1">Preautophagosomal structure membrane</location>
        <topology evidence="1">Peripheral membrane protein</topology>
    </subcellularLocation>
    <subcellularLocation>
        <location evidence="1">Vacuole membrane</location>
        <topology evidence="1">Peripheral membrane protein</topology>
    </subcellularLocation>
    <subcellularLocation>
        <location evidence="1">Endosome membrane</location>
        <topology evidence="1">Peripheral membrane protein</topology>
    </subcellularLocation>
    <text evidence="1">Requires VAC7 for vacuole membrane localization. Under mid-log phase growth, localizes to the vacuolar membrane; but when cells are starved, is almost completely released from the vacuole membrane (By similarity).</text>
</comment>
<comment type="domain">
    <text evidence="1">The 377 first amino acids might form a beta-propeller domain involved in specific binding to phosphatidylinositol 3,5-bisphosphate (PIP2), leading to the association of the protein to the membrane. Association to the membrane can also occur through binding to phosphatidylinositol 3-monophosphate (PI3P).</text>
</comment>
<comment type="domain">
    <text evidence="2">The L/FRRG motif is essential for the cytoplasm to vacuole transport (Cvt) pathway, for the recruitment of ATG8 and ATG16 to the PAS in nutrient-rich medium, and for its recruitment to and dissociation from the PAS under starvation conditions.</text>
</comment>
<comment type="similarity">
    <text evidence="4">Belongs to the WD repeat PROPPIN family.</text>
</comment>
<evidence type="ECO:0000250" key="1"/>
<evidence type="ECO:0000250" key="2">
    <source>
        <dbReference type="UniProtKB" id="P43601"/>
    </source>
</evidence>
<evidence type="ECO:0000256" key="3">
    <source>
        <dbReference type="SAM" id="MobiDB-lite"/>
    </source>
</evidence>
<evidence type="ECO:0000305" key="4"/>
<protein>
    <recommendedName>
        <fullName>Autophagy-related protein 18</fullName>
    </recommendedName>
    <alternativeName>
        <fullName>Cytoplasm to vacuole targeting protein 18</fullName>
    </alternativeName>
    <alternativeName>
        <fullName>Needed for premeiotic replication protein 1</fullName>
    </alternativeName>
    <alternativeName>
        <fullName>Swollen vacuole phenotype protein 1</fullName>
    </alternativeName>
</protein>